<name>MEP5_TRIVH</name>
<accession>D4DIT1</accession>
<dbReference type="EC" id="3.4.24.-"/>
<dbReference type="EMBL" id="ACYE01000412">
    <property type="protein sequence ID" value="EFE38255.1"/>
    <property type="molecule type" value="Genomic_DNA"/>
</dbReference>
<dbReference type="RefSeq" id="XP_003018900.1">
    <property type="nucleotide sequence ID" value="XM_003018854.1"/>
</dbReference>
<dbReference type="SMR" id="D4DIT1"/>
<dbReference type="MEROPS" id="M36.001"/>
<dbReference type="GlyCosmos" id="D4DIT1">
    <property type="glycosylation" value="3 sites, No reported glycans"/>
</dbReference>
<dbReference type="GeneID" id="9580072"/>
<dbReference type="KEGG" id="tve:TRV_07092"/>
<dbReference type="HOGENOM" id="CLU_012703_3_0_1"/>
<dbReference type="OrthoDB" id="1300at34384"/>
<dbReference type="Proteomes" id="UP000008383">
    <property type="component" value="Unassembled WGS sequence"/>
</dbReference>
<dbReference type="GO" id="GO:0005576">
    <property type="term" value="C:extracellular region"/>
    <property type="evidence" value="ECO:0007669"/>
    <property type="project" value="UniProtKB-SubCell"/>
</dbReference>
<dbReference type="GO" id="GO:0004222">
    <property type="term" value="F:metalloendopeptidase activity"/>
    <property type="evidence" value="ECO:0007669"/>
    <property type="project" value="InterPro"/>
</dbReference>
<dbReference type="GO" id="GO:0008270">
    <property type="term" value="F:zinc ion binding"/>
    <property type="evidence" value="ECO:0007669"/>
    <property type="project" value="InterPro"/>
</dbReference>
<dbReference type="GO" id="GO:0006508">
    <property type="term" value="P:proteolysis"/>
    <property type="evidence" value="ECO:0007669"/>
    <property type="project" value="UniProtKB-KW"/>
</dbReference>
<dbReference type="CDD" id="cd09596">
    <property type="entry name" value="M36"/>
    <property type="match status" value="1"/>
</dbReference>
<dbReference type="Gene3D" id="3.10.170.10">
    <property type="match status" value="1"/>
</dbReference>
<dbReference type="Gene3D" id="1.10.390.10">
    <property type="entry name" value="Neutral Protease Domain 2"/>
    <property type="match status" value="1"/>
</dbReference>
<dbReference type="InterPro" id="IPR011096">
    <property type="entry name" value="FTP_domain"/>
</dbReference>
<dbReference type="InterPro" id="IPR050371">
    <property type="entry name" value="Fungal_virulence_M36"/>
</dbReference>
<dbReference type="InterPro" id="IPR001842">
    <property type="entry name" value="Peptidase_M36"/>
</dbReference>
<dbReference type="InterPro" id="IPR027268">
    <property type="entry name" value="Peptidase_M4/M1_CTD_sf"/>
</dbReference>
<dbReference type="PANTHER" id="PTHR33478">
    <property type="entry name" value="EXTRACELLULAR METALLOPROTEINASE MEP"/>
    <property type="match status" value="1"/>
</dbReference>
<dbReference type="PANTHER" id="PTHR33478:SF1">
    <property type="entry name" value="EXTRACELLULAR METALLOPROTEINASE MEP"/>
    <property type="match status" value="1"/>
</dbReference>
<dbReference type="Pfam" id="PF07504">
    <property type="entry name" value="FTP"/>
    <property type="match status" value="1"/>
</dbReference>
<dbReference type="Pfam" id="PF02128">
    <property type="entry name" value="Peptidase_M36"/>
    <property type="match status" value="1"/>
</dbReference>
<dbReference type="PRINTS" id="PR00999">
    <property type="entry name" value="FUNGALYSIN"/>
</dbReference>
<dbReference type="SUPFAM" id="SSF55486">
    <property type="entry name" value="Metalloproteases ('zincins'), catalytic domain"/>
    <property type="match status" value="1"/>
</dbReference>
<dbReference type="PROSITE" id="PS00142">
    <property type="entry name" value="ZINC_PROTEASE"/>
    <property type="match status" value="1"/>
</dbReference>
<protein>
    <recommendedName>
        <fullName>Probable extracellular metalloproteinase 5</fullName>
        <ecNumber>3.4.24.-</ecNumber>
    </recommendedName>
    <alternativeName>
        <fullName>Fungalysin MEP5</fullName>
    </alternativeName>
</protein>
<proteinExistence type="inferred from homology"/>
<gene>
    <name type="primary">MEP5</name>
    <name type="ORF">TRV_07092</name>
</gene>
<comment type="function">
    <text evidence="1">Secreted metalloproteinase probably acting as a virulence factor.</text>
</comment>
<comment type="cofactor">
    <cofactor evidence="1">
        <name>Zn(2+)</name>
        <dbReference type="ChEBI" id="CHEBI:29105"/>
    </cofactor>
    <text evidence="1">Binds 1 zinc ion per subunit.</text>
</comment>
<comment type="subcellular location">
    <subcellularLocation>
        <location evidence="1">Secreted</location>
    </subcellularLocation>
</comment>
<comment type="similarity">
    <text evidence="4">Belongs to the peptidase M36 family.</text>
</comment>
<sequence>MHGLLLAAAGLLSLPLHVLAHPQPSTNLAGRGVDLDAYRMADRSSYMSSDDMKLKQPAIASLSGGNYVDTATEVVKRMMPGMTFRMVDDHYVGESGISHVYFRQTMHGMDIDNADFNVNIGKDGKVLSVGHSFYTGPAPDKAPVEKRDFSDPMQAFHGACKALNLSINSDKATIQTMNEHEVMFMGTSGAMSDPQGKLCYMAKEDGTLALTWRVETDMGDNWLLSYVDAKETDKVHNVVDYVSHATYQVYKWPIPDPTEGKREIVENPWNLKTSPFTWISDGKTNYTTTRGNNAIAQANFDGGEDYLNNYRPDSKNLKFEYPYAPNMSPPKSYIDASVTQLFYSANMVHDLYYMLGFTEKAGNFQVNNHGQGGKGNDFVILNAQDGSGTNNANFATPPDGKPGRMRVYIWTKAKPSRGSSFEAGTVIHEYTHGLSNRLCGGPANAGCLNGMESGGMGEGWGDFFATAIRLKPNDNRNSNYVHGEWVNNSPKGNRLYPYSTNLQTNPLVYTSCNKYNEVHAIGTVWCSILYEVLWNLIDKHGKNDGPTPVFENGVPNDGKYLALKLVLDGMAIQPCKPTFVQARDAIIDADMNLTKGSNKCELWKAFAKRGLGVGAKYDPKNRTGSKAVPKECQ</sequence>
<feature type="signal peptide" evidence="2">
    <location>
        <begin position="1"/>
        <end position="20"/>
    </location>
</feature>
<feature type="propeptide" id="PRO_0000397740" evidence="1">
    <location>
        <begin position="21"/>
        <end position="244"/>
    </location>
</feature>
<feature type="chain" id="PRO_0000397741" description="Probable extracellular metalloproteinase 5">
    <location>
        <begin position="245"/>
        <end position="633"/>
    </location>
</feature>
<feature type="active site" evidence="3">
    <location>
        <position position="429"/>
    </location>
</feature>
<feature type="binding site" evidence="3">
    <location>
        <position position="428"/>
    </location>
    <ligand>
        <name>Zn(2+)</name>
        <dbReference type="ChEBI" id="CHEBI:29105"/>
        <note>catalytic</note>
    </ligand>
</feature>
<feature type="binding site" evidence="3">
    <location>
        <position position="432"/>
    </location>
    <ligand>
        <name>Zn(2+)</name>
        <dbReference type="ChEBI" id="CHEBI:29105"/>
        <note>catalytic</note>
    </ligand>
</feature>
<feature type="glycosylation site" description="N-linked (GlcNAc...) asparagine" evidence="2">
    <location>
        <position position="285"/>
    </location>
</feature>
<feature type="glycosylation site" description="N-linked (GlcNAc...) asparagine" evidence="2">
    <location>
        <position position="592"/>
    </location>
</feature>
<feature type="glycosylation site" description="N-linked (GlcNAc...) asparagine" evidence="2">
    <location>
        <position position="621"/>
    </location>
</feature>
<organism>
    <name type="scientific">Trichophyton verrucosum (strain HKI 0517)</name>
    <dbReference type="NCBI Taxonomy" id="663202"/>
    <lineage>
        <taxon>Eukaryota</taxon>
        <taxon>Fungi</taxon>
        <taxon>Dikarya</taxon>
        <taxon>Ascomycota</taxon>
        <taxon>Pezizomycotina</taxon>
        <taxon>Eurotiomycetes</taxon>
        <taxon>Eurotiomycetidae</taxon>
        <taxon>Onygenales</taxon>
        <taxon>Arthrodermataceae</taxon>
        <taxon>Trichophyton</taxon>
    </lineage>
</organism>
<reference key="1">
    <citation type="journal article" date="2011" name="Genome Biol.">
        <title>Comparative and functional genomics provide insights into the pathogenicity of dermatophytic fungi.</title>
        <authorList>
            <person name="Burmester A."/>
            <person name="Shelest E."/>
            <person name="Gloeckner G."/>
            <person name="Heddergott C."/>
            <person name="Schindler S."/>
            <person name="Staib P."/>
            <person name="Heidel A."/>
            <person name="Felder M."/>
            <person name="Petzold A."/>
            <person name="Szafranski K."/>
            <person name="Feuermann M."/>
            <person name="Pedruzzi I."/>
            <person name="Priebe S."/>
            <person name="Groth M."/>
            <person name="Winkler R."/>
            <person name="Li W."/>
            <person name="Kniemeyer O."/>
            <person name="Schroeckh V."/>
            <person name="Hertweck C."/>
            <person name="Hube B."/>
            <person name="White T.C."/>
            <person name="Platzer M."/>
            <person name="Guthke R."/>
            <person name="Heitman J."/>
            <person name="Woestemeyer J."/>
            <person name="Zipfel P.F."/>
            <person name="Monod M."/>
            <person name="Brakhage A.A."/>
        </authorList>
    </citation>
    <scope>NUCLEOTIDE SEQUENCE [LARGE SCALE GENOMIC DNA]</scope>
    <source>
        <strain>HKI 0517</strain>
    </source>
</reference>
<evidence type="ECO:0000250" key="1"/>
<evidence type="ECO:0000255" key="2"/>
<evidence type="ECO:0000255" key="3">
    <source>
        <dbReference type="PROSITE-ProRule" id="PRU10095"/>
    </source>
</evidence>
<evidence type="ECO:0000305" key="4"/>
<keyword id="KW-0325">Glycoprotein</keyword>
<keyword id="KW-0378">Hydrolase</keyword>
<keyword id="KW-0479">Metal-binding</keyword>
<keyword id="KW-0482">Metalloprotease</keyword>
<keyword id="KW-0645">Protease</keyword>
<keyword id="KW-0964">Secreted</keyword>
<keyword id="KW-0732">Signal</keyword>
<keyword id="KW-0843">Virulence</keyword>
<keyword id="KW-0862">Zinc</keyword>
<keyword id="KW-0865">Zymogen</keyword>